<feature type="chain" id="PRO_0000261986" description="Nucleotide-binding protein Tery_2743">
    <location>
        <begin position="1"/>
        <end position="163"/>
    </location>
</feature>
<organism>
    <name type="scientific">Trichodesmium erythraeum (strain IMS101)</name>
    <dbReference type="NCBI Taxonomy" id="203124"/>
    <lineage>
        <taxon>Bacteria</taxon>
        <taxon>Bacillati</taxon>
        <taxon>Cyanobacteriota</taxon>
        <taxon>Cyanophyceae</taxon>
        <taxon>Oscillatoriophycideae</taxon>
        <taxon>Oscillatoriales</taxon>
        <taxon>Microcoleaceae</taxon>
        <taxon>Trichodesmium</taxon>
    </lineage>
</organism>
<keyword id="KW-0547">Nucleotide-binding</keyword>
<dbReference type="EMBL" id="CP000393">
    <property type="protein sequence ID" value="ABG51927.1"/>
    <property type="molecule type" value="Genomic_DNA"/>
</dbReference>
<dbReference type="RefSeq" id="WP_011612288.1">
    <property type="nucleotide sequence ID" value="NC_008312.1"/>
</dbReference>
<dbReference type="SMR" id="Q110Z7"/>
<dbReference type="STRING" id="203124.Tery_2743"/>
<dbReference type="KEGG" id="ter:Tery_2743"/>
<dbReference type="eggNOG" id="COG1666">
    <property type="taxonomic scope" value="Bacteria"/>
</dbReference>
<dbReference type="HOGENOM" id="CLU_099839_0_0_3"/>
<dbReference type="OrthoDB" id="9801447at2"/>
<dbReference type="GO" id="GO:0005829">
    <property type="term" value="C:cytosol"/>
    <property type="evidence" value="ECO:0007669"/>
    <property type="project" value="TreeGrafter"/>
</dbReference>
<dbReference type="GO" id="GO:0000166">
    <property type="term" value="F:nucleotide binding"/>
    <property type="evidence" value="ECO:0007669"/>
    <property type="project" value="TreeGrafter"/>
</dbReference>
<dbReference type="CDD" id="cd11740">
    <property type="entry name" value="YajQ_like"/>
    <property type="match status" value="1"/>
</dbReference>
<dbReference type="Gene3D" id="3.30.70.860">
    <property type="match status" value="1"/>
</dbReference>
<dbReference type="Gene3D" id="3.30.70.990">
    <property type="entry name" value="YajQ-like, domain 2"/>
    <property type="match status" value="1"/>
</dbReference>
<dbReference type="HAMAP" id="MF_00632">
    <property type="entry name" value="YajQ"/>
    <property type="match status" value="1"/>
</dbReference>
<dbReference type="InterPro" id="IPR007551">
    <property type="entry name" value="DUF520"/>
</dbReference>
<dbReference type="InterPro" id="IPR035571">
    <property type="entry name" value="UPF0234-like_C"/>
</dbReference>
<dbReference type="InterPro" id="IPR035570">
    <property type="entry name" value="UPF0234_N"/>
</dbReference>
<dbReference type="InterPro" id="IPR036183">
    <property type="entry name" value="YajQ-like_sf"/>
</dbReference>
<dbReference type="NCBIfam" id="NF003819">
    <property type="entry name" value="PRK05412.1"/>
    <property type="match status" value="1"/>
</dbReference>
<dbReference type="PANTHER" id="PTHR30476">
    <property type="entry name" value="UPF0234 PROTEIN YAJQ"/>
    <property type="match status" value="1"/>
</dbReference>
<dbReference type="PANTHER" id="PTHR30476:SF0">
    <property type="entry name" value="UPF0234 PROTEIN YAJQ"/>
    <property type="match status" value="1"/>
</dbReference>
<dbReference type="Pfam" id="PF04461">
    <property type="entry name" value="DUF520"/>
    <property type="match status" value="1"/>
</dbReference>
<dbReference type="SUPFAM" id="SSF89963">
    <property type="entry name" value="YajQ-like"/>
    <property type="match status" value="2"/>
</dbReference>
<accession>Q110Z7</accession>
<evidence type="ECO:0000255" key="1">
    <source>
        <dbReference type="HAMAP-Rule" id="MF_00632"/>
    </source>
</evidence>
<reference key="1">
    <citation type="journal article" date="2015" name="Proc. Natl. Acad. Sci. U.S.A.">
        <title>Trichodesmium genome maintains abundant, widespread noncoding DNA in situ, despite oligotrophic lifestyle.</title>
        <authorList>
            <person name="Walworth N."/>
            <person name="Pfreundt U."/>
            <person name="Nelson W.C."/>
            <person name="Mincer T."/>
            <person name="Heidelberg J.F."/>
            <person name="Fu F."/>
            <person name="Waterbury J.B."/>
            <person name="Glavina del Rio T."/>
            <person name="Goodwin L."/>
            <person name="Kyrpides N.C."/>
            <person name="Land M.L."/>
            <person name="Woyke T."/>
            <person name="Hutchins D.A."/>
            <person name="Hess W.R."/>
            <person name="Webb E.A."/>
        </authorList>
    </citation>
    <scope>NUCLEOTIDE SEQUENCE [LARGE SCALE GENOMIC DNA]</scope>
    <source>
        <strain>IMS101</strain>
    </source>
</reference>
<proteinExistence type="inferred from homology"/>
<name>Y2743_TRIEI</name>
<gene>
    <name type="ordered locus">Tery_2743</name>
</gene>
<sequence length="163" mass="18377">MASTSSFDIVSDFDRQELVNAIDQAEREIKARYDLKDSNTSLELGEDTITINTSSQFSLDAVHTVLQTKAAKRNLSLKIFDFGKVESASGNRVRQEVKLQKGISQENAKKITKLIKDEFKKVQSSIQGDAVRVSAKSKDELQAVMQRLKAEDFPMPLQFTNYR</sequence>
<comment type="function">
    <text evidence="1">Nucleotide-binding protein.</text>
</comment>
<comment type="similarity">
    <text evidence="1">Belongs to the YajQ family.</text>
</comment>
<protein>
    <recommendedName>
        <fullName evidence="1">Nucleotide-binding protein Tery_2743</fullName>
    </recommendedName>
</protein>